<protein>
    <recommendedName>
        <fullName>5-aminolevulinate synthase</fullName>
        <ecNumber>2.3.1.37</ecNumber>
    </recommendedName>
    <alternativeName>
        <fullName>5-aminolevulinic acid synthase</fullName>
    </alternativeName>
    <alternativeName>
        <fullName>Delta-ALA synthase</fullName>
    </alternativeName>
    <alternativeName>
        <fullName>Delta-aminolevulinate synthase</fullName>
    </alternativeName>
</protein>
<accession>Q68VS3</accession>
<comment type="catalytic activity">
    <reaction>
        <text>succinyl-CoA + glycine + H(+) = 5-aminolevulinate + CO2 + CoA</text>
        <dbReference type="Rhea" id="RHEA:12921"/>
        <dbReference type="ChEBI" id="CHEBI:15378"/>
        <dbReference type="ChEBI" id="CHEBI:16526"/>
        <dbReference type="ChEBI" id="CHEBI:57287"/>
        <dbReference type="ChEBI" id="CHEBI:57292"/>
        <dbReference type="ChEBI" id="CHEBI:57305"/>
        <dbReference type="ChEBI" id="CHEBI:356416"/>
        <dbReference type="EC" id="2.3.1.37"/>
    </reaction>
</comment>
<comment type="cofactor">
    <cofactor evidence="1">
        <name>pyridoxal 5'-phosphate</name>
        <dbReference type="ChEBI" id="CHEBI:597326"/>
    </cofactor>
</comment>
<comment type="pathway">
    <text>Porphyrin-containing compound metabolism; protoporphyrin-IX biosynthesis; 5-aminolevulinate from glycine: step 1/1.</text>
</comment>
<comment type="subunit">
    <text evidence="1">Homodimer.</text>
</comment>
<comment type="similarity">
    <text evidence="2">Belongs to the class-II pyridoxal-phosphate-dependent aminotransferase family.</text>
</comment>
<reference key="1">
    <citation type="journal article" date="2004" name="J. Bacteriol.">
        <title>Complete genome sequence of Rickettsia typhi and comparison with sequences of other Rickettsiae.</title>
        <authorList>
            <person name="McLeod M.P."/>
            <person name="Qin X."/>
            <person name="Karpathy S.E."/>
            <person name="Gioia J."/>
            <person name="Highlander S.K."/>
            <person name="Fox G.E."/>
            <person name="McNeill T.Z."/>
            <person name="Jiang H."/>
            <person name="Muzny D."/>
            <person name="Jacob L.S."/>
            <person name="Hawes A.C."/>
            <person name="Sodergren E."/>
            <person name="Gill R."/>
            <person name="Hume J."/>
            <person name="Morgan M."/>
            <person name="Fan G."/>
            <person name="Amin A.G."/>
            <person name="Gibbs R.A."/>
            <person name="Hong C."/>
            <person name="Yu X.-J."/>
            <person name="Walker D.H."/>
            <person name="Weinstock G.M."/>
        </authorList>
    </citation>
    <scope>NUCLEOTIDE SEQUENCE [LARGE SCALE GENOMIC DNA]</scope>
    <source>
        <strain>ATCC VR-144 / Wilmington</strain>
    </source>
</reference>
<organism>
    <name type="scientific">Rickettsia typhi (strain ATCC VR-144 / Wilmington)</name>
    <dbReference type="NCBI Taxonomy" id="257363"/>
    <lineage>
        <taxon>Bacteria</taxon>
        <taxon>Pseudomonadati</taxon>
        <taxon>Pseudomonadota</taxon>
        <taxon>Alphaproteobacteria</taxon>
        <taxon>Rickettsiales</taxon>
        <taxon>Rickettsiaceae</taxon>
        <taxon>Rickettsieae</taxon>
        <taxon>Rickettsia</taxon>
        <taxon>typhus group</taxon>
    </lineage>
</organism>
<name>HEM1_RICTY</name>
<sequence>MSYYDTIFNKHIDKIKSEGRYREFKSLKRQADNFPFAEYEDKQIVMWCINDYLGMSKHIKVMQASIDALLEYGVGSGGTRNIGGNNISILELEKELADLHSKETALVFTSGFVANDTTLASLAKIIPDIVFFSDELNHASIIAGITSSRAEKYVYRHLDVQHLEKLLQSVDINKPKIIVFESAYSMDGFFSPIKDIINLAKKYNALTFIDEVHTVGLYGKQGGGISELLDCSNQIDIIQGTLAKAYGTIGGYITSNYNLIDAIRLTAPGFIFTTSLPPVISTAATHSIRHLKVSNEERIKHQEVVTKLKNSFEHFNIPYLKNESHIIPIIIGDPIKATKVSNMLLNEYGIYVQHINFPTVPRGTERLRIIPTPAHTDKMINDLSTALVHIFAELDIELSSTKELNKEVRLHLIA</sequence>
<feature type="chain" id="PRO_0000280899" description="5-aminolevulinate synthase">
    <location>
        <begin position="1"/>
        <end position="414"/>
    </location>
</feature>
<feature type="active site" evidence="1">
    <location>
        <position position="244"/>
    </location>
</feature>
<feature type="binding site" evidence="1">
    <location>
        <position position="22"/>
    </location>
    <ligand>
        <name>substrate</name>
    </ligand>
</feature>
<feature type="binding site" evidence="1">
    <location>
        <position position="133"/>
    </location>
    <ligand>
        <name>substrate</name>
    </ligand>
</feature>
<feature type="binding site" evidence="1">
    <location>
        <position position="152"/>
    </location>
    <ligand>
        <name>substrate</name>
    </ligand>
</feature>
<feature type="binding site" description="in other chain" evidence="1">
    <location>
        <position position="185"/>
    </location>
    <ligand>
        <name>pyridoxal 5'-phosphate</name>
        <dbReference type="ChEBI" id="CHEBI:597326"/>
        <note>ligand shared between dimeric partners</note>
    </ligand>
</feature>
<feature type="binding site" description="in other chain" evidence="1">
    <location>
        <position position="213"/>
    </location>
    <ligand>
        <name>pyridoxal 5'-phosphate</name>
        <dbReference type="ChEBI" id="CHEBI:597326"/>
        <note>ligand shared between dimeric partners</note>
    </ligand>
</feature>
<feature type="binding site" description="in other chain" evidence="1">
    <location>
        <position position="241"/>
    </location>
    <ligand>
        <name>pyridoxal 5'-phosphate</name>
        <dbReference type="ChEBI" id="CHEBI:597326"/>
        <note>ligand shared between dimeric partners</note>
    </ligand>
</feature>
<feature type="binding site" evidence="1">
    <location>
        <position position="273"/>
    </location>
    <ligand>
        <name>pyridoxal 5'-phosphate</name>
        <dbReference type="ChEBI" id="CHEBI:597326"/>
        <note>ligand shared between dimeric partners</note>
    </ligand>
</feature>
<feature type="binding site" evidence="1">
    <location>
        <position position="274"/>
    </location>
    <ligand>
        <name>pyridoxal 5'-phosphate</name>
        <dbReference type="ChEBI" id="CHEBI:597326"/>
        <note>ligand shared between dimeric partners</note>
    </ligand>
</feature>
<feature type="binding site" evidence="1">
    <location>
        <position position="359"/>
    </location>
    <ligand>
        <name>substrate</name>
    </ligand>
</feature>
<feature type="modified residue" description="N6-(pyridoxal phosphate)lysine" evidence="1">
    <location>
        <position position="244"/>
    </location>
</feature>
<dbReference type="EC" id="2.3.1.37"/>
<dbReference type="EMBL" id="AE017197">
    <property type="protein sequence ID" value="AAU04283.1"/>
    <property type="molecule type" value="Genomic_DNA"/>
</dbReference>
<dbReference type="RefSeq" id="WP_011191257.1">
    <property type="nucleotide sequence ID" value="NC_006142.1"/>
</dbReference>
<dbReference type="SMR" id="Q68VS3"/>
<dbReference type="KEGG" id="rty:RT0829"/>
<dbReference type="eggNOG" id="COG0156">
    <property type="taxonomic scope" value="Bacteria"/>
</dbReference>
<dbReference type="HOGENOM" id="CLU_015846_11_1_5"/>
<dbReference type="OrthoDB" id="9807157at2"/>
<dbReference type="UniPathway" id="UPA00251">
    <property type="reaction ID" value="UER00375"/>
</dbReference>
<dbReference type="Proteomes" id="UP000000604">
    <property type="component" value="Chromosome"/>
</dbReference>
<dbReference type="GO" id="GO:0003870">
    <property type="term" value="F:5-aminolevulinate synthase activity"/>
    <property type="evidence" value="ECO:0007669"/>
    <property type="project" value="UniProtKB-EC"/>
</dbReference>
<dbReference type="GO" id="GO:0030170">
    <property type="term" value="F:pyridoxal phosphate binding"/>
    <property type="evidence" value="ECO:0007669"/>
    <property type="project" value="InterPro"/>
</dbReference>
<dbReference type="GO" id="GO:0006782">
    <property type="term" value="P:protoporphyrinogen IX biosynthetic process"/>
    <property type="evidence" value="ECO:0007669"/>
    <property type="project" value="UniProtKB-UniPathway"/>
</dbReference>
<dbReference type="CDD" id="cd06454">
    <property type="entry name" value="KBL_like"/>
    <property type="match status" value="1"/>
</dbReference>
<dbReference type="FunFam" id="3.40.640.10:FF:000006">
    <property type="entry name" value="5-aminolevulinate synthase, mitochondrial"/>
    <property type="match status" value="1"/>
</dbReference>
<dbReference type="Gene3D" id="3.90.1150.10">
    <property type="entry name" value="Aspartate Aminotransferase, domain 1"/>
    <property type="match status" value="1"/>
</dbReference>
<dbReference type="Gene3D" id="3.40.640.10">
    <property type="entry name" value="Type I PLP-dependent aspartate aminotransferase-like (Major domain)"/>
    <property type="match status" value="1"/>
</dbReference>
<dbReference type="InterPro" id="IPR010961">
    <property type="entry name" value="4pyrrol_synth_NH2levulA_synth"/>
</dbReference>
<dbReference type="InterPro" id="IPR001917">
    <property type="entry name" value="Aminotrans_II_pyridoxalP_BS"/>
</dbReference>
<dbReference type="InterPro" id="IPR004839">
    <property type="entry name" value="Aminotransferase_I/II_large"/>
</dbReference>
<dbReference type="InterPro" id="IPR050087">
    <property type="entry name" value="AON_synthase_class-II"/>
</dbReference>
<dbReference type="InterPro" id="IPR015424">
    <property type="entry name" value="PyrdxlP-dep_Trfase"/>
</dbReference>
<dbReference type="InterPro" id="IPR015421">
    <property type="entry name" value="PyrdxlP-dep_Trfase_major"/>
</dbReference>
<dbReference type="InterPro" id="IPR015422">
    <property type="entry name" value="PyrdxlP-dep_Trfase_small"/>
</dbReference>
<dbReference type="NCBIfam" id="TIGR01821">
    <property type="entry name" value="5aminolev_synth"/>
    <property type="match status" value="1"/>
</dbReference>
<dbReference type="PANTHER" id="PTHR13693:SF102">
    <property type="entry name" value="2-AMINO-3-KETOBUTYRATE COENZYME A LIGASE, MITOCHONDRIAL"/>
    <property type="match status" value="1"/>
</dbReference>
<dbReference type="PANTHER" id="PTHR13693">
    <property type="entry name" value="CLASS II AMINOTRANSFERASE/8-AMINO-7-OXONONANOATE SYNTHASE"/>
    <property type="match status" value="1"/>
</dbReference>
<dbReference type="Pfam" id="PF00155">
    <property type="entry name" value="Aminotran_1_2"/>
    <property type="match status" value="1"/>
</dbReference>
<dbReference type="SUPFAM" id="SSF53383">
    <property type="entry name" value="PLP-dependent transferases"/>
    <property type="match status" value="1"/>
</dbReference>
<dbReference type="PROSITE" id="PS00599">
    <property type="entry name" value="AA_TRANSFER_CLASS_2"/>
    <property type="match status" value="1"/>
</dbReference>
<keyword id="KW-0012">Acyltransferase</keyword>
<keyword id="KW-0350">Heme biosynthesis</keyword>
<keyword id="KW-0663">Pyridoxal phosphate</keyword>
<keyword id="KW-0808">Transferase</keyword>
<proteinExistence type="inferred from homology"/>
<evidence type="ECO:0000250" key="1">
    <source>
        <dbReference type="UniProtKB" id="P18079"/>
    </source>
</evidence>
<evidence type="ECO:0000305" key="2"/>
<gene>
    <name type="primary">hemA</name>
    <name type="ordered locus">RT0829</name>
</gene>